<gene>
    <name evidence="1" type="primary">rplI</name>
    <name evidence="1" type="synonym">rpl9</name>
    <name type="ordered locus">SynWH7803_2418</name>
</gene>
<name>RL9_SYNPW</name>
<keyword id="KW-1185">Reference proteome</keyword>
<keyword id="KW-0687">Ribonucleoprotein</keyword>
<keyword id="KW-0689">Ribosomal protein</keyword>
<keyword id="KW-0694">RNA-binding</keyword>
<keyword id="KW-0699">rRNA-binding</keyword>
<protein>
    <recommendedName>
        <fullName evidence="1">Large ribosomal subunit protein bL9</fullName>
    </recommendedName>
    <alternativeName>
        <fullName evidence="2">50S ribosomal protein L9</fullName>
    </alternativeName>
</protein>
<comment type="function">
    <text evidence="1">Binds to the 23S rRNA.</text>
</comment>
<comment type="similarity">
    <text evidence="1">Belongs to the bacterial ribosomal protein bL9 family.</text>
</comment>
<organism>
    <name type="scientific">Synechococcus sp. (strain WH7803)</name>
    <dbReference type="NCBI Taxonomy" id="32051"/>
    <lineage>
        <taxon>Bacteria</taxon>
        <taxon>Bacillati</taxon>
        <taxon>Cyanobacteriota</taxon>
        <taxon>Cyanophyceae</taxon>
        <taxon>Synechococcales</taxon>
        <taxon>Synechococcaceae</taxon>
        <taxon>Synechococcus</taxon>
    </lineage>
</organism>
<feature type="chain" id="PRO_1000014876" description="Large ribosomal subunit protein bL9">
    <location>
        <begin position="1"/>
        <end position="152"/>
    </location>
</feature>
<sequence>MAKRVQVVLNEDVLSLGRDGDMVEVAPGYARNFLLPYGKAVPVTPAVMKQVEHRRAKEAERQAALKQEALAFRTALDTIGRFTVKKQTGDDDVLFGTVTNGDVAEVIEEATKKEVDRRDITVPDIHRTGNYKVSVKLHSEVTAEINLEVVSY</sequence>
<evidence type="ECO:0000255" key="1">
    <source>
        <dbReference type="HAMAP-Rule" id="MF_00503"/>
    </source>
</evidence>
<evidence type="ECO:0000305" key="2"/>
<reference key="1">
    <citation type="submission" date="2006-05" db="EMBL/GenBank/DDBJ databases">
        <authorList>
            <consortium name="Genoscope"/>
        </authorList>
    </citation>
    <scope>NUCLEOTIDE SEQUENCE [LARGE SCALE GENOMIC DNA]</scope>
    <source>
        <strain>WH7803</strain>
    </source>
</reference>
<dbReference type="EMBL" id="CT971583">
    <property type="protein sequence ID" value="CAK24844.1"/>
    <property type="molecule type" value="Genomic_DNA"/>
</dbReference>
<dbReference type="SMR" id="A5GPH9"/>
<dbReference type="STRING" id="32051.SynWH7803_2418"/>
<dbReference type="KEGG" id="syx:SynWH7803_2418"/>
<dbReference type="eggNOG" id="COG0359">
    <property type="taxonomic scope" value="Bacteria"/>
</dbReference>
<dbReference type="HOGENOM" id="CLU_078938_5_1_3"/>
<dbReference type="OrthoDB" id="9788336at2"/>
<dbReference type="Proteomes" id="UP000001566">
    <property type="component" value="Chromosome"/>
</dbReference>
<dbReference type="GO" id="GO:1990904">
    <property type="term" value="C:ribonucleoprotein complex"/>
    <property type="evidence" value="ECO:0007669"/>
    <property type="project" value="UniProtKB-KW"/>
</dbReference>
<dbReference type="GO" id="GO:0005840">
    <property type="term" value="C:ribosome"/>
    <property type="evidence" value="ECO:0007669"/>
    <property type="project" value="UniProtKB-KW"/>
</dbReference>
<dbReference type="GO" id="GO:0019843">
    <property type="term" value="F:rRNA binding"/>
    <property type="evidence" value="ECO:0007669"/>
    <property type="project" value="UniProtKB-UniRule"/>
</dbReference>
<dbReference type="GO" id="GO:0003735">
    <property type="term" value="F:structural constituent of ribosome"/>
    <property type="evidence" value="ECO:0007669"/>
    <property type="project" value="InterPro"/>
</dbReference>
<dbReference type="GO" id="GO:0006412">
    <property type="term" value="P:translation"/>
    <property type="evidence" value="ECO:0007669"/>
    <property type="project" value="UniProtKB-UniRule"/>
</dbReference>
<dbReference type="Gene3D" id="3.10.430.100">
    <property type="entry name" value="Ribosomal protein L9, C-terminal domain"/>
    <property type="match status" value="1"/>
</dbReference>
<dbReference type="Gene3D" id="3.40.5.10">
    <property type="entry name" value="Ribosomal protein L9, N-terminal domain"/>
    <property type="match status" value="1"/>
</dbReference>
<dbReference type="HAMAP" id="MF_00503">
    <property type="entry name" value="Ribosomal_bL9"/>
    <property type="match status" value="1"/>
</dbReference>
<dbReference type="InterPro" id="IPR000244">
    <property type="entry name" value="Ribosomal_bL9"/>
</dbReference>
<dbReference type="InterPro" id="IPR009027">
    <property type="entry name" value="Ribosomal_bL9/RNase_H1_N"/>
</dbReference>
<dbReference type="InterPro" id="IPR020594">
    <property type="entry name" value="Ribosomal_bL9_bac/chp"/>
</dbReference>
<dbReference type="InterPro" id="IPR020069">
    <property type="entry name" value="Ribosomal_bL9_C"/>
</dbReference>
<dbReference type="InterPro" id="IPR036791">
    <property type="entry name" value="Ribosomal_bL9_C_sf"/>
</dbReference>
<dbReference type="InterPro" id="IPR020070">
    <property type="entry name" value="Ribosomal_bL9_N"/>
</dbReference>
<dbReference type="InterPro" id="IPR036935">
    <property type="entry name" value="Ribosomal_bL9_N_sf"/>
</dbReference>
<dbReference type="NCBIfam" id="TIGR00158">
    <property type="entry name" value="L9"/>
    <property type="match status" value="1"/>
</dbReference>
<dbReference type="PANTHER" id="PTHR21368">
    <property type="entry name" value="50S RIBOSOMAL PROTEIN L9"/>
    <property type="match status" value="1"/>
</dbReference>
<dbReference type="Pfam" id="PF03948">
    <property type="entry name" value="Ribosomal_L9_C"/>
    <property type="match status" value="1"/>
</dbReference>
<dbReference type="Pfam" id="PF01281">
    <property type="entry name" value="Ribosomal_L9_N"/>
    <property type="match status" value="1"/>
</dbReference>
<dbReference type="SUPFAM" id="SSF55658">
    <property type="entry name" value="L9 N-domain-like"/>
    <property type="match status" value="1"/>
</dbReference>
<dbReference type="SUPFAM" id="SSF55653">
    <property type="entry name" value="Ribosomal protein L9 C-domain"/>
    <property type="match status" value="1"/>
</dbReference>
<dbReference type="PROSITE" id="PS00651">
    <property type="entry name" value="RIBOSOMAL_L9"/>
    <property type="match status" value="1"/>
</dbReference>
<accession>A5GPH9</accession>
<proteinExistence type="inferred from homology"/>